<accession>Q57651</accession>
<keyword id="KW-1185">Reference proteome</keyword>
<name>Y198_METJA</name>
<organism>
    <name type="scientific">Methanocaldococcus jannaschii (strain ATCC 43067 / DSM 2661 / JAL-1 / JCM 10045 / NBRC 100440)</name>
    <name type="common">Methanococcus jannaschii</name>
    <dbReference type="NCBI Taxonomy" id="243232"/>
    <lineage>
        <taxon>Archaea</taxon>
        <taxon>Methanobacteriati</taxon>
        <taxon>Methanobacteriota</taxon>
        <taxon>Methanomada group</taxon>
        <taxon>Methanococci</taxon>
        <taxon>Methanococcales</taxon>
        <taxon>Methanocaldococcaceae</taxon>
        <taxon>Methanocaldococcus</taxon>
    </lineage>
</organism>
<feature type="chain" id="PRO_0000106737" description="Uncharacterized protein MJ0198">
    <location>
        <begin position="1"/>
        <end position="314"/>
    </location>
</feature>
<proteinExistence type="predicted"/>
<gene>
    <name type="ordered locus">MJ0198</name>
</gene>
<sequence length="314" mass="35242">MTNVIIEKISAKEVFKGAKIKVMITTMTNISIGYDIIEVNNPEEAIADVENVIAPELIGYPATDIDFIDSLICETSVNNPTVAMGISISVARAASNSLDIPLFKFLGGALTTELPIVASGILVDKDKNELIPIVMADSIEDIVNLYLKLTDVLSHDYSIVNIDGAYTCKDIFNEIPKIRNLIDEIKEDEDLDILLGLSSKKETVKDKDLSQIDYLEVEEPVEFDGFLCTDSIYEESDFVKVFPYEMGTITEMYYYINYIMDKGLYPVIFGNNSSFAHIAVSFKVPFLRPKLSSNVLNEVWNIERTIMNPNIRRF</sequence>
<reference key="1">
    <citation type="journal article" date="1996" name="Science">
        <title>Complete genome sequence of the methanogenic archaeon, Methanococcus jannaschii.</title>
        <authorList>
            <person name="Bult C.J."/>
            <person name="White O."/>
            <person name="Olsen G.J."/>
            <person name="Zhou L."/>
            <person name="Fleischmann R.D."/>
            <person name="Sutton G.G."/>
            <person name="Blake J.A."/>
            <person name="FitzGerald L.M."/>
            <person name="Clayton R.A."/>
            <person name="Gocayne J.D."/>
            <person name="Kerlavage A.R."/>
            <person name="Dougherty B.A."/>
            <person name="Tomb J.-F."/>
            <person name="Adams M.D."/>
            <person name="Reich C.I."/>
            <person name="Overbeek R."/>
            <person name="Kirkness E.F."/>
            <person name="Weinstock K.G."/>
            <person name="Merrick J.M."/>
            <person name="Glodek A."/>
            <person name="Scott J.L."/>
            <person name="Geoghagen N.S.M."/>
            <person name="Weidman J.F."/>
            <person name="Fuhrmann J.L."/>
            <person name="Nguyen D."/>
            <person name="Utterback T.R."/>
            <person name="Kelley J.M."/>
            <person name="Peterson J.D."/>
            <person name="Sadow P.W."/>
            <person name="Hanna M.C."/>
            <person name="Cotton M.D."/>
            <person name="Roberts K.M."/>
            <person name="Hurst M.A."/>
            <person name="Kaine B.P."/>
            <person name="Borodovsky M."/>
            <person name="Klenk H.-P."/>
            <person name="Fraser C.M."/>
            <person name="Smith H.O."/>
            <person name="Woese C.R."/>
            <person name="Venter J.C."/>
        </authorList>
    </citation>
    <scope>NUCLEOTIDE SEQUENCE [LARGE SCALE GENOMIC DNA]</scope>
    <source>
        <strain>ATCC 43067 / DSM 2661 / JAL-1 / JCM 10045 / NBRC 100440</strain>
    </source>
</reference>
<dbReference type="EMBL" id="L77117">
    <property type="protein sequence ID" value="AAB98193.1"/>
    <property type="molecule type" value="Genomic_DNA"/>
</dbReference>
<dbReference type="PIR" id="G64324">
    <property type="entry name" value="G64324"/>
</dbReference>
<dbReference type="RefSeq" id="WP_010869693.1">
    <property type="nucleotide sequence ID" value="NC_000909.1"/>
</dbReference>
<dbReference type="SMR" id="Q57651"/>
<dbReference type="STRING" id="243232.MJ_0198"/>
<dbReference type="PaxDb" id="243232-MJ_0198"/>
<dbReference type="EnsemblBacteria" id="AAB98193">
    <property type="protein sequence ID" value="AAB98193"/>
    <property type="gene ID" value="MJ_0198"/>
</dbReference>
<dbReference type="GeneID" id="1451047"/>
<dbReference type="KEGG" id="mja:MJ_0198"/>
<dbReference type="eggNOG" id="arCOG01170">
    <property type="taxonomic scope" value="Archaea"/>
</dbReference>
<dbReference type="HOGENOM" id="CLU_893150_0_0_2"/>
<dbReference type="InParanoid" id="Q57651"/>
<dbReference type="OrthoDB" id="59929at2157"/>
<dbReference type="PhylomeDB" id="Q57651"/>
<dbReference type="Proteomes" id="UP000000805">
    <property type="component" value="Chromosome"/>
</dbReference>
<dbReference type="InterPro" id="IPR029017">
    <property type="entry name" value="Enolase-like_N"/>
</dbReference>
<dbReference type="InterPro" id="IPR020811">
    <property type="entry name" value="Enolase_N"/>
</dbReference>
<dbReference type="SMART" id="SM01193">
    <property type="entry name" value="Enolase_N"/>
    <property type="match status" value="1"/>
</dbReference>
<dbReference type="SUPFAM" id="SSF54826">
    <property type="entry name" value="Enolase N-terminal domain-like"/>
    <property type="match status" value="1"/>
</dbReference>
<protein>
    <recommendedName>
        <fullName>Uncharacterized protein MJ0198</fullName>
    </recommendedName>
</protein>